<evidence type="ECO:0000255" key="1">
    <source>
        <dbReference type="HAMAP-Rule" id="MF_01868"/>
    </source>
</evidence>
<evidence type="ECO:0000305" key="2"/>
<proteinExistence type="inferred from homology"/>
<protein>
    <recommendedName>
        <fullName evidence="1">Lipopolysaccharide core heptose(II)-phosphate phosphatase</fullName>
        <ecNumber evidence="1">3.1.3.-</ecNumber>
    </recommendedName>
</protein>
<name>AIS_SHIF8</name>
<accession>Q0T2N1</accession>
<feature type="signal peptide" evidence="1">
    <location>
        <begin position="1"/>
        <end position="25"/>
    </location>
</feature>
<feature type="chain" id="PRO_0000380589" description="Lipopolysaccharide core heptose(II)-phosphate phosphatase">
    <location>
        <begin position="26"/>
        <end position="200"/>
    </location>
</feature>
<dbReference type="EC" id="3.1.3.-" evidence="1"/>
<dbReference type="EMBL" id="CP000266">
    <property type="protein sequence ID" value="ABF04434.1"/>
    <property type="status" value="ALT_INIT"/>
    <property type="molecule type" value="Genomic_DNA"/>
</dbReference>
<dbReference type="RefSeq" id="WP_024260288.1">
    <property type="nucleotide sequence ID" value="NC_008258.1"/>
</dbReference>
<dbReference type="SMR" id="Q0T2N1"/>
<dbReference type="KEGG" id="sfv:SFV_2322"/>
<dbReference type="HOGENOM" id="CLU_106705_1_0_6"/>
<dbReference type="UniPathway" id="UPA00451"/>
<dbReference type="Proteomes" id="UP000000659">
    <property type="component" value="Chromosome"/>
</dbReference>
<dbReference type="GO" id="GO:0042597">
    <property type="term" value="C:periplasmic space"/>
    <property type="evidence" value="ECO:0007669"/>
    <property type="project" value="UniProtKB-SubCell"/>
</dbReference>
<dbReference type="GO" id="GO:0016791">
    <property type="term" value="F:phosphatase activity"/>
    <property type="evidence" value="ECO:0007669"/>
    <property type="project" value="UniProtKB-UniRule"/>
</dbReference>
<dbReference type="GO" id="GO:0008653">
    <property type="term" value="P:lipopolysaccharide metabolic process"/>
    <property type="evidence" value="ECO:0007669"/>
    <property type="project" value="UniProtKB-UniRule"/>
</dbReference>
<dbReference type="CDD" id="cd07040">
    <property type="entry name" value="HP"/>
    <property type="match status" value="1"/>
</dbReference>
<dbReference type="Gene3D" id="3.40.50.1240">
    <property type="entry name" value="Phosphoglycerate mutase-like"/>
    <property type="match status" value="1"/>
</dbReference>
<dbReference type="HAMAP" id="MF_01868">
    <property type="entry name" value="Ais"/>
    <property type="match status" value="1"/>
</dbReference>
<dbReference type="InterPro" id="IPR013078">
    <property type="entry name" value="His_Pase_superF_clade-1"/>
</dbReference>
<dbReference type="InterPro" id="IPR029033">
    <property type="entry name" value="His_PPase_superfam"/>
</dbReference>
<dbReference type="InterPro" id="IPR011310">
    <property type="entry name" value="LipoPS_heptP_Pase"/>
</dbReference>
<dbReference type="NCBIfam" id="NF011945">
    <property type="entry name" value="PRK15416.1"/>
    <property type="match status" value="1"/>
</dbReference>
<dbReference type="Pfam" id="PF00300">
    <property type="entry name" value="His_Phos_1"/>
    <property type="match status" value="1"/>
</dbReference>
<dbReference type="PIRSF" id="PIRSF011416">
    <property type="entry name" value="Ais-TraG-AfrS"/>
    <property type="match status" value="1"/>
</dbReference>
<dbReference type="SUPFAM" id="SSF53254">
    <property type="entry name" value="Phosphoglycerate mutase-like"/>
    <property type="match status" value="1"/>
</dbReference>
<keyword id="KW-0378">Hydrolase</keyword>
<keyword id="KW-0574">Periplasm</keyword>
<keyword id="KW-0732">Signal</keyword>
<sequence length="200" mass="22320">MLAFCRSSLKSKKYFIILLALAAIAGLGTHAAWSSNGLPRIDNKTLARLAQQHPVVVLFRHAERCDRSTNQCLSDKTGITVKGTQDARELGNAFSADIPDFDLYSSNTVRTIQSATWFSAGKKLTVDKRLLQCGNEIYSAIKDLQSKAPDKNIVIFTHNHCMTYIAKNKRDAIFKPDYLDGLVMHVEKGKVYLDGEFVNH</sequence>
<reference key="1">
    <citation type="journal article" date="2006" name="BMC Genomics">
        <title>Complete genome sequence of Shigella flexneri 5b and comparison with Shigella flexneri 2a.</title>
        <authorList>
            <person name="Nie H."/>
            <person name="Yang F."/>
            <person name="Zhang X."/>
            <person name="Yang J."/>
            <person name="Chen L."/>
            <person name="Wang J."/>
            <person name="Xiong Z."/>
            <person name="Peng J."/>
            <person name="Sun L."/>
            <person name="Dong J."/>
            <person name="Xue Y."/>
            <person name="Xu X."/>
            <person name="Chen S."/>
            <person name="Yao Z."/>
            <person name="Shen Y."/>
            <person name="Jin Q."/>
        </authorList>
    </citation>
    <scope>NUCLEOTIDE SEQUENCE [LARGE SCALE GENOMIC DNA]</scope>
    <source>
        <strain>8401</strain>
    </source>
</reference>
<comment type="function">
    <text evidence="1">Catalyzes the dephosphorylation of heptose(II) of the outer membrane lipopolysaccharide core.</text>
</comment>
<comment type="pathway">
    <text evidence="1">Bacterial outer membrane biogenesis; lipopolysaccharide metabolism.</text>
</comment>
<comment type="subcellular location">
    <subcellularLocation>
        <location evidence="1">Periplasm</location>
    </subcellularLocation>
</comment>
<comment type="similarity">
    <text evidence="1">Belongs to the phosphoglycerate mutase family. Ais subfamily.</text>
</comment>
<comment type="sequence caution" evidence="2">
    <conflict type="erroneous initiation">
        <sequence resource="EMBL-CDS" id="ABF04434"/>
    </conflict>
</comment>
<gene>
    <name evidence="1" type="primary">ais</name>
    <name type="ordered locus">SFV_2322</name>
</gene>
<organism>
    <name type="scientific">Shigella flexneri serotype 5b (strain 8401)</name>
    <dbReference type="NCBI Taxonomy" id="373384"/>
    <lineage>
        <taxon>Bacteria</taxon>
        <taxon>Pseudomonadati</taxon>
        <taxon>Pseudomonadota</taxon>
        <taxon>Gammaproteobacteria</taxon>
        <taxon>Enterobacterales</taxon>
        <taxon>Enterobacteriaceae</taxon>
        <taxon>Shigella</taxon>
    </lineage>
</organism>